<keyword id="KW-0028">Amino-acid biosynthesis</keyword>
<keyword id="KW-0100">Branched-chain amino acid biosynthesis</keyword>
<keyword id="KW-0460">Magnesium</keyword>
<keyword id="KW-0479">Metal-binding</keyword>
<keyword id="KW-0521">NADP</keyword>
<keyword id="KW-0560">Oxidoreductase</keyword>
<keyword id="KW-1185">Reference proteome</keyword>
<protein>
    <recommendedName>
        <fullName evidence="1">Ketol-acid reductoisomerase (NADP(+))</fullName>
        <shortName evidence="1">KARI</shortName>
        <ecNumber evidence="1">1.1.1.86</ecNumber>
    </recommendedName>
    <alternativeName>
        <fullName evidence="1">Acetohydroxy-acid isomeroreductase</fullName>
        <shortName evidence="1">AHIR</shortName>
    </alternativeName>
    <alternativeName>
        <fullName evidence="1">Alpha-keto-beta-hydroxylacyl reductoisomerase</fullName>
    </alternativeName>
    <alternativeName>
        <fullName evidence="1">Ketol-acid reductoisomerase type 1</fullName>
    </alternativeName>
    <alternativeName>
        <fullName evidence="1">Ketol-acid reductoisomerase type I</fullName>
    </alternativeName>
</protein>
<feature type="chain" id="PRO_1000190967" description="Ketol-acid reductoisomerase (NADP(+))">
    <location>
        <begin position="1"/>
        <end position="338"/>
    </location>
</feature>
<feature type="domain" description="KARI N-terminal Rossmann" evidence="2">
    <location>
        <begin position="1"/>
        <end position="181"/>
    </location>
</feature>
<feature type="domain" description="KARI C-terminal knotted" evidence="3">
    <location>
        <begin position="182"/>
        <end position="327"/>
    </location>
</feature>
<feature type="active site" evidence="1">
    <location>
        <position position="107"/>
    </location>
</feature>
<feature type="binding site" evidence="1">
    <location>
        <begin position="24"/>
        <end position="27"/>
    </location>
    <ligand>
        <name>NADP(+)</name>
        <dbReference type="ChEBI" id="CHEBI:58349"/>
    </ligand>
</feature>
<feature type="binding site" evidence="1">
    <location>
        <position position="47"/>
    </location>
    <ligand>
        <name>NADP(+)</name>
        <dbReference type="ChEBI" id="CHEBI:58349"/>
    </ligand>
</feature>
<feature type="binding site" evidence="1">
    <location>
        <position position="50"/>
    </location>
    <ligand>
        <name>NADP(+)</name>
        <dbReference type="ChEBI" id="CHEBI:58349"/>
    </ligand>
</feature>
<feature type="binding site" evidence="1">
    <location>
        <position position="52"/>
    </location>
    <ligand>
        <name>NADP(+)</name>
        <dbReference type="ChEBI" id="CHEBI:58349"/>
    </ligand>
</feature>
<feature type="binding site" evidence="1">
    <location>
        <begin position="82"/>
        <end position="85"/>
    </location>
    <ligand>
        <name>NADP(+)</name>
        <dbReference type="ChEBI" id="CHEBI:58349"/>
    </ligand>
</feature>
<feature type="binding site" evidence="1">
    <location>
        <position position="133"/>
    </location>
    <ligand>
        <name>NADP(+)</name>
        <dbReference type="ChEBI" id="CHEBI:58349"/>
    </ligand>
</feature>
<feature type="binding site" evidence="1">
    <location>
        <position position="190"/>
    </location>
    <ligand>
        <name>Mg(2+)</name>
        <dbReference type="ChEBI" id="CHEBI:18420"/>
        <label>1</label>
    </ligand>
</feature>
<feature type="binding site" evidence="1">
    <location>
        <position position="190"/>
    </location>
    <ligand>
        <name>Mg(2+)</name>
        <dbReference type="ChEBI" id="CHEBI:18420"/>
        <label>2</label>
    </ligand>
</feature>
<feature type="binding site" evidence="1">
    <location>
        <position position="194"/>
    </location>
    <ligand>
        <name>Mg(2+)</name>
        <dbReference type="ChEBI" id="CHEBI:18420"/>
        <label>1</label>
    </ligand>
</feature>
<feature type="binding site" evidence="1">
    <location>
        <position position="226"/>
    </location>
    <ligand>
        <name>Mg(2+)</name>
        <dbReference type="ChEBI" id="CHEBI:18420"/>
        <label>2</label>
    </ligand>
</feature>
<feature type="binding site" evidence="1">
    <location>
        <position position="230"/>
    </location>
    <ligand>
        <name>Mg(2+)</name>
        <dbReference type="ChEBI" id="CHEBI:18420"/>
        <label>2</label>
    </ligand>
</feature>
<feature type="binding site" evidence="1">
    <location>
        <position position="251"/>
    </location>
    <ligand>
        <name>substrate</name>
    </ligand>
</feature>
<reference key="1">
    <citation type="submission" date="2008-05" db="EMBL/GenBank/DDBJ databases">
        <title>Complete sequence of chromosome of Geobacter lovleyi SZ.</title>
        <authorList>
            <consortium name="US DOE Joint Genome Institute"/>
            <person name="Lucas S."/>
            <person name="Copeland A."/>
            <person name="Lapidus A."/>
            <person name="Glavina del Rio T."/>
            <person name="Dalin E."/>
            <person name="Tice H."/>
            <person name="Bruce D."/>
            <person name="Goodwin L."/>
            <person name="Pitluck S."/>
            <person name="Chertkov O."/>
            <person name="Meincke L."/>
            <person name="Brettin T."/>
            <person name="Detter J.C."/>
            <person name="Han C."/>
            <person name="Tapia R."/>
            <person name="Kuske C.R."/>
            <person name="Schmutz J."/>
            <person name="Larimer F."/>
            <person name="Land M."/>
            <person name="Hauser L."/>
            <person name="Kyrpides N."/>
            <person name="Mikhailova N."/>
            <person name="Sung Y."/>
            <person name="Fletcher K.E."/>
            <person name="Ritalahti K.M."/>
            <person name="Loeffler F.E."/>
            <person name="Richardson P."/>
        </authorList>
    </citation>
    <scope>NUCLEOTIDE SEQUENCE [LARGE SCALE GENOMIC DNA]</scope>
    <source>
        <strain>ATCC BAA-1151 / DSM 17278 / SZ</strain>
    </source>
</reference>
<organism>
    <name type="scientific">Trichlorobacter lovleyi (strain ATCC BAA-1151 / DSM 17278 / SZ)</name>
    <name type="common">Geobacter lovleyi</name>
    <dbReference type="NCBI Taxonomy" id="398767"/>
    <lineage>
        <taxon>Bacteria</taxon>
        <taxon>Pseudomonadati</taxon>
        <taxon>Thermodesulfobacteriota</taxon>
        <taxon>Desulfuromonadia</taxon>
        <taxon>Geobacterales</taxon>
        <taxon>Geobacteraceae</taxon>
        <taxon>Trichlorobacter</taxon>
    </lineage>
</organism>
<evidence type="ECO:0000255" key="1">
    <source>
        <dbReference type="HAMAP-Rule" id="MF_00435"/>
    </source>
</evidence>
<evidence type="ECO:0000255" key="2">
    <source>
        <dbReference type="PROSITE-ProRule" id="PRU01197"/>
    </source>
</evidence>
<evidence type="ECO:0000255" key="3">
    <source>
        <dbReference type="PROSITE-ProRule" id="PRU01198"/>
    </source>
</evidence>
<sequence length="338" mass="36559">MNVYYDRDCDLALIQSKKVTIVGYGSQGHAHACNLKDSGVDVTVALREGSASAVKAQNAGLKVATVAEAVASADVIMILTPDEFQSVLYRDEIEPKLKKGATLAFAHGFAIHYNQIVPRADLDVIMIAPKAPGHTVRSEYVRGGGIPDLIAVFQDASGKAREVALSYASAIGGGRTGIIETTFKDETETDLFGEQAVLCGGAVELVKAGFETLVEAGYAPEMAYFECLHELKLIVDLMFEGGIANMNYSISNNAEYGEYVTGPKVINEQSRAAMKECLNNIQNGEYAKRFILEGMSNYPEMTARRRLNAAHPIEVVGGNLRAMMPWIGKNKIVDKAKN</sequence>
<name>ILVC_TRIL1</name>
<accession>B3E5X4</accession>
<comment type="function">
    <text evidence="1">Involved in the biosynthesis of branched-chain amino acids (BCAA). Catalyzes an alkyl-migration followed by a ketol-acid reduction of (S)-2-acetolactate (S2AL) to yield (R)-2,3-dihydroxy-isovalerate. In the isomerase reaction, S2AL is rearranged via a Mg-dependent methyl migration to produce 3-hydroxy-3-methyl-2-ketobutyrate (HMKB). In the reductase reaction, this 2-ketoacid undergoes a metal-dependent reduction by NADPH to yield (R)-2,3-dihydroxy-isovalerate.</text>
</comment>
<comment type="catalytic activity">
    <reaction evidence="1">
        <text>(2R)-2,3-dihydroxy-3-methylbutanoate + NADP(+) = (2S)-2-acetolactate + NADPH + H(+)</text>
        <dbReference type="Rhea" id="RHEA:22068"/>
        <dbReference type="ChEBI" id="CHEBI:15378"/>
        <dbReference type="ChEBI" id="CHEBI:49072"/>
        <dbReference type="ChEBI" id="CHEBI:57783"/>
        <dbReference type="ChEBI" id="CHEBI:58349"/>
        <dbReference type="ChEBI" id="CHEBI:58476"/>
        <dbReference type="EC" id="1.1.1.86"/>
    </reaction>
</comment>
<comment type="catalytic activity">
    <reaction evidence="1">
        <text>(2R,3R)-2,3-dihydroxy-3-methylpentanoate + NADP(+) = (S)-2-ethyl-2-hydroxy-3-oxobutanoate + NADPH + H(+)</text>
        <dbReference type="Rhea" id="RHEA:13493"/>
        <dbReference type="ChEBI" id="CHEBI:15378"/>
        <dbReference type="ChEBI" id="CHEBI:49256"/>
        <dbReference type="ChEBI" id="CHEBI:49258"/>
        <dbReference type="ChEBI" id="CHEBI:57783"/>
        <dbReference type="ChEBI" id="CHEBI:58349"/>
        <dbReference type="EC" id="1.1.1.86"/>
    </reaction>
</comment>
<comment type="cofactor">
    <cofactor evidence="1">
        <name>Mg(2+)</name>
        <dbReference type="ChEBI" id="CHEBI:18420"/>
    </cofactor>
    <text evidence="1">Binds 2 magnesium ions per subunit.</text>
</comment>
<comment type="pathway">
    <text evidence="1">Amino-acid biosynthesis; L-isoleucine biosynthesis; L-isoleucine from 2-oxobutanoate: step 2/4.</text>
</comment>
<comment type="pathway">
    <text evidence="1">Amino-acid biosynthesis; L-valine biosynthesis; L-valine from pyruvate: step 2/4.</text>
</comment>
<comment type="similarity">
    <text evidence="1">Belongs to the ketol-acid reductoisomerase family.</text>
</comment>
<proteinExistence type="inferred from homology"/>
<dbReference type="EC" id="1.1.1.86" evidence="1"/>
<dbReference type="EMBL" id="CP001089">
    <property type="protein sequence ID" value="ACD96215.1"/>
    <property type="molecule type" value="Genomic_DNA"/>
</dbReference>
<dbReference type="RefSeq" id="WP_012470548.1">
    <property type="nucleotide sequence ID" value="NC_010814.1"/>
</dbReference>
<dbReference type="SMR" id="B3E5X4"/>
<dbReference type="STRING" id="398767.Glov_2501"/>
<dbReference type="KEGG" id="glo:Glov_2501"/>
<dbReference type="eggNOG" id="COG0059">
    <property type="taxonomic scope" value="Bacteria"/>
</dbReference>
<dbReference type="HOGENOM" id="CLU_033821_0_1_7"/>
<dbReference type="OrthoDB" id="9804088at2"/>
<dbReference type="UniPathway" id="UPA00047">
    <property type="reaction ID" value="UER00056"/>
</dbReference>
<dbReference type="UniPathway" id="UPA00049">
    <property type="reaction ID" value="UER00060"/>
</dbReference>
<dbReference type="Proteomes" id="UP000002420">
    <property type="component" value="Chromosome"/>
</dbReference>
<dbReference type="GO" id="GO:0005829">
    <property type="term" value="C:cytosol"/>
    <property type="evidence" value="ECO:0007669"/>
    <property type="project" value="TreeGrafter"/>
</dbReference>
<dbReference type="GO" id="GO:0004455">
    <property type="term" value="F:ketol-acid reductoisomerase activity"/>
    <property type="evidence" value="ECO:0007669"/>
    <property type="project" value="UniProtKB-UniRule"/>
</dbReference>
<dbReference type="GO" id="GO:0000287">
    <property type="term" value="F:magnesium ion binding"/>
    <property type="evidence" value="ECO:0007669"/>
    <property type="project" value="UniProtKB-UniRule"/>
</dbReference>
<dbReference type="GO" id="GO:0050661">
    <property type="term" value="F:NADP binding"/>
    <property type="evidence" value="ECO:0007669"/>
    <property type="project" value="InterPro"/>
</dbReference>
<dbReference type="GO" id="GO:0009097">
    <property type="term" value="P:isoleucine biosynthetic process"/>
    <property type="evidence" value="ECO:0007669"/>
    <property type="project" value="UniProtKB-UniRule"/>
</dbReference>
<dbReference type="GO" id="GO:0009099">
    <property type="term" value="P:L-valine biosynthetic process"/>
    <property type="evidence" value="ECO:0007669"/>
    <property type="project" value="UniProtKB-UniRule"/>
</dbReference>
<dbReference type="FunFam" id="3.40.50.720:FF:000023">
    <property type="entry name" value="Ketol-acid reductoisomerase (NADP(+))"/>
    <property type="match status" value="1"/>
</dbReference>
<dbReference type="Gene3D" id="6.10.240.10">
    <property type="match status" value="1"/>
</dbReference>
<dbReference type="Gene3D" id="3.40.50.720">
    <property type="entry name" value="NAD(P)-binding Rossmann-like Domain"/>
    <property type="match status" value="1"/>
</dbReference>
<dbReference type="HAMAP" id="MF_00435">
    <property type="entry name" value="IlvC"/>
    <property type="match status" value="1"/>
</dbReference>
<dbReference type="InterPro" id="IPR008927">
    <property type="entry name" value="6-PGluconate_DH-like_C_sf"/>
</dbReference>
<dbReference type="InterPro" id="IPR013023">
    <property type="entry name" value="KARI"/>
</dbReference>
<dbReference type="InterPro" id="IPR000506">
    <property type="entry name" value="KARI_C"/>
</dbReference>
<dbReference type="InterPro" id="IPR013116">
    <property type="entry name" value="KARI_N"/>
</dbReference>
<dbReference type="InterPro" id="IPR014359">
    <property type="entry name" value="KARI_prok"/>
</dbReference>
<dbReference type="InterPro" id="IPR036291">
    <property type="entry name" value="NAD(P)-bd_dom_sf"/>
</dbReference>
<dbReference type="NCBIfam" id="TIGR00465">
    <property type="entry name" value="ilvC"/>
    <property type="match status" value="1"/>
</dbReference>
<dbReference type="NCBIfam" id="NF004017">
    <property type="entry name" value="PRK05479.1"/>
    <property type="match status" value="1"/>
</dbReference>
<dbReference type="NCBIfam" id="NF009940">
    <property type="entry name" value="PRK13403.1"/>
    <property type="match status" value="1"/>
</dbReference>
<dbReference type="PANTHER" id="PTHR21371">
    <property type="entry name" value="KETOL-ACID REDUCTOISOMERASE, MITOCHONDRIAL"/>
    <property type="match status" value="1"/>
</dbReference>
<dbReference type="PANTHER" id="PTHR21371:SF1">
    <property type="entry name" value="KETOL-ACID REDUCTOISOMERASE, MITOCHONDRIAL"/>
    <property type="match status" value="1"/>
</dbReference>
<dbReference type="Pfam" id="PF01450">
    <property type="entry name" value="KARI_C"/>
    <property type="match status" value="1"/>
</dbReference>
<dbReference type="Pfam" id="PF07991">
    <property type="entry name" value="KARI_N"/>
    <property type="match status" value="1"/>
</dbReference>
<dbReference type="PIRSF" id="PIRSF000116">
    <property type="entry name" value="IlvC_gammaproteo"/>
    <property type="match status" value="1"/>
</dbReference>
<dbReference type="SUPFAM" id="SSF48179">
    <property type="entry name" value="6-phosphogluconate dehydrogenase C-terminal domain-like"/>
    <property type="match status" value="1"/>
</dbReference>
<dbReference type="SUPFAM" id="SSF51735">
    <property type="entry name" value="NAD(P)-binding Rossmann-fold domains"/>
    <property type="match status" value="1"/>
</dbReference>
<dbReference type="PROSITE" id="PS51851">
    <property type="entry name" value="KARI_C"/>
    <property type="match status" value="1"/>
</dbReference>
<dbReference type="PROSITE" id="PS51850">
    <property type="entry name" value="KARI_N"/>
    <property type="match status" value="1"/>
</dbReference>
<gene>
    <name evidence="1" type="primary">ilvC</name>
    <name type="ordered locus">Glov_2501</name>
</gene>